<sequence length="85" mass="9649">MNYLVMISFAFLLMTGVESVRDAYIAQNYNCVYHCARDAYCNELCTKNGAKSGSCPYLGEHKFACYCKDLPDNVPIRVPGKCHRR</sequence>
<dbReference type="EMBL" id="AF151796">
    <property type="protein sequence ID" value="AAG39640.1"/>
    <property type="molecule type" value="mRNA"/>
</dbReference>
<dbReference type="PDB" id="1OMY">
    <property type="method" value="X-ray"/>
    <property type="resolution" value="2.00 A"/>
    <property type="chains" value="A=20-83"/>
</dbReference>
<dbReference type="PDB" id="2E0H">
    <property type="method" value="NMR"/>
    <property type="chains" value="A=20-83"/>
</dbReference>
<dbReference type="PDBsum" id="1OMY"/>
<dbReference type="PDBsum" id="2E0H"/>
<dbReference type="BMRB" id="Q9GQW3"/>
<dbReference type="SMR" id="Q9GQW3"/>
<dbReference type="EvolutionaryTrace" id="Q9GQW3"/>
<dbReference type="GO" id="GO:0005576">
    <property type="term" value="C:extracellular region"/>
    <property type="evidence" value="ECO:0007669"/>
    <property type="project" value="UniProtKB-SubCell"/>
</dbReference>
<dbReference type="GO" id="GO:0019871">
    <property type="term" value="F:sodium channel inhibitor activity"/>
    <property type="evidence" value="ECO:0007669"/>
    <property type="project" value="InterPro"/>
</dbReference>
<dbReference type="GO" id="GO:0090729">
    <property type="term" value="F:toxin activity"/>
    <property type="evidence" value="ECO:0007669"/>
    <property type="project" value="UniProtKB-KW"/>
</dbReference>
<dbReference type="GO" id="GO:0006952">
    <property type="term" value="P:defense response"/>
    <property type="evidence" value="ECO:0007669"/>
    <property type="project" value="InterPro"/>
</dbReference>
<dbReference type="CDD" id="cd23106">
    <property type="entry name" value="neurotoxins_LC_scorpion"/>
    <property type="match status" value="1"/>
</dbReference>
<dbReference type="Gene3D" id="3.30.30.10">
    <property type="entry name" value="Knottin, scorpion toxin-like"/>
    <property type="match status" value="1"/>
</dbReference>
<dbReference type="InterPro" id="IPR044062">
    <property type="entry name" value="LCN-type_CS_alpha_beta_dom"/>
</dbReference>
<dbReference type="InterPro" id="IPR003614">
    <property type="entry name" value="Scorpion_toxin-like"/>
</dbReference>
<dbReference type="InterPro" id="IPR036574">
    <property type="entry name" value="Scorpion_toxin-like_sf"/>
</dbReference>
<dbReference type="InterPro" id="IPR018218">
    <property type="entry name" value="Scorpion_toxinL"/>
</dbReference>
<dbReference type="InterPro" id="IPR002061">
    <property type="entry name" value="Scorpion_toxinL/defensin"/>
</dbReference>
<dbReference type="Pfam" id="PF00537">
    <property type="entry name" value="Toxin_3"/>
    <property type="match status" value="1"/>
</dbReference>
<dbReference type="PRINTS" id="PR00285">
    <property type="entry name" value="SCORPNTOXIN"/>
</dbReference>
<dbReference type="SMART" id="SM00505">
    <property type="entry name" value="Knot1"/>
    <property type="match status" value="1"/>
</dbReference>
<dbReference type="SUPFAM" id="SSF57095">
    <property type="entry name" value="Scorpion toxin-like"/>
    <property type="match status" value="1"/>
</dbReference>
<dbReference type="PROSITE" id="PS51863">
    <property type="entry name" value="LCN_CSAB"/>
    <property type="match status" value="1"/>
</dbReference>
<feature type="signal peptide">
    <location>
        <begin position="1"/>
        <end position="19"/>
    </location>
</feature>
<feature type="chain" id="PRO_0000035246" description="Toxin BmKaIT1">
    <location>
        <begin position="20"/>
        <end position="83"/>
    </location>
</feature>
<feature type="propeptide" id="PRO_0000035247" description="Removed by a carboxypeptidase" evidence="5">
    <location>
        <begin position="84"/>
        <end position="85"/>
    </location>
</feature>
<feature type="domain" description="LCN-type CS-alpha/beta" evidence="2">
    <location>
        <begin position="21"/>
        <end position="83"/>
    </location>
</feature>
<feature type="disulfide bond" evidence="2">
    <location>
        <begin position="31"/>
        <end position="82"/>
    </location>
</feature>
<feature type="disulfide bond" evidence="2">
    <location>
        <begin position="35"/>
        <end position="55"/>
    </location>
</feature>
<feature type="disulfide bond" evidence="2">
    <location>
        <begin position="41"/>
        <end position="65"/>
    </location>
</feature>
<feature type="disulfide bond" evidence="2">
    <location>
        <begin position="45"/>
        <end position="67"/>
    </location>
</feature>
<feature type="strand" evidence="6">
    <location>
        <begin position="21"/>
        <end position="27"/>
    </location>
</feature>
<feature type="turn" evidence="6">
    <location>
        <begin position="28"/>
        <end position="30"/>
    </location>
</feature>
<feature type="helix" evidence="6">
    <location>
        <begin position="38"/>
        <end position="46"/>
    </location>
</feature>
<feature type="turn" evidence="6">
    <location>
        <begin position="47"/>
        <end position="49"/>
    </location>
</feature>
<feature type="strand" evidence="6">
    <location>
        <begin position="51"/>
        <end position="54"/>
    </location>
</feature>
<feature type="strand" evidence="6">
    <location>
        <begin position="57"/>
        <end position="64"/>
    </location>
</feature>
<feature type="strand" evidence="6">
    <location>
        <begin position="66"/>
        <end position="70"/>
    </location>
</feature>
<name>SC12_OLIMR</name>
<organism>
    <name type="scientific">Olivierus martensii</name>
    <name type="common">Manchurian scorpion</name>
    <name type="synonym">Mesobuthus martensii</name>
    <dbReference type="NCBI Taxonomy" id="34649"/>
    <lineage>
        <taxon>Eukaryota</taxon>
        <taxon>Metazoa</taxon>
        <taxon>Ecdysozoa</taxon>
        <taxon>Arthropoda</taxon>
        <taxon>Chelicerata</taxon>
        <taxon>Arachnida</taxon>
        <taxon>Scorpiones</taxon>
        <taxon>Buthida</taxon>
        <taxon>Buthoidea</taxon>
        <taxon>Buthidae</taxon>
        <taxon>Olivierus</taxon>
    </lineage>
</organism>
<comment type="function">
    <text evidence="1 3 4">Alpha toxins bind voltage-independently at site-3 of sodium channels (Nav) and inhibit the inactivation of the activated channels, thereby blocking neuronal transmission (By similarity). Shows a high toxicity toward insects and moderate toxicity against mammals.</text>
</comment>
<comment type="subcellular location">
    <subcellularLocation>
        <location>Secreted</location>
    </subcellularLocation>
</comment>
<comment type="tissue specificity">
    <text>Expressed by the venom gland.</text>
</comment>
<comment type="domain">
    <text evidence="5">Has the structural arrangement of an alpha-helix connected to antiparallel beta-sheets by disulfide bonds (CS-alpha/beta).</text>
</comment>
<comment type="miscellaneous">
    <text>Exists in two forms, due to cis-trans isomerization at 28-Asn-Tyr-29. Adopts a predominately cis conformation.</text>
</comment>
<comment type="similarity">
    <text evidence="5">Belongs to the long (4 C-C) scorpion toxin superfamily. Sodium channel inhibitor family. Alpha subfamily.</text>
</comment>
<keyword id="KW-0002">3D-structure</keyword>
<keyword id="KW-1015">Disulfide bond</keyword>
<keyword id="KW-0872">Ion channel impairing toxin</keyword>
<keyword id="KW-0528">Neurotoxin</keyword>
<keyword id="KW-0964">Secreted</keyword>
<keyword id="KW-0732">Signal</keyword>
<keyword id="KW-0800">Toxin</keyword>
<keyword id="KW-0738">Voltage-gated sodium channel impairing toxin</keyword>
<reference key="1">
    <citation type="journal article" date="2000" name="Toxicon">
        <title>Nine novel precursors of Buthus martensii scorpion alpha-toxin homologues.</title>
        <authorList>
            <person name="Zhu S.-Y."/>
            <person name="Li W.-X."/>
            <person name="Zeng X.-C."/>
            <person name="Liu H."/>
            <person name="Jiang D.-H."/>
            <person name="Mao X."/>
        </authorList>
    </citation>
    <scope>NUCLEOTIDE SEQUENCE [MRNA]</scope>
    <source>
        <tissue>Venom gland</tissue>
    </source>
</reference>
<reference key="2">
    <citation type="journal article" date="2003" name="Acta Crystallogr. D">
        <title>Crystallization and preliminary crystallographic study of rBmKalphaIT1, a recombinant alpha-insect toxin from the scorpion Buthus martensii Karsch.</title>
        <authorList>
            <person name="Huang Y."/>
            <person name="Huang Q."/>
            <person name="Chen H."/>
            <person name="Tang Y."/>
            <person name="Miyake H."/>
            <person name="Kusunoki M."/>
        </authorList>
    </citation>
    <scope>SEQUENCE REVISION</scope>
    <scope>X-RAY CRYSTALLOGRAPHY (2.0 ANGSTROMS) OF 20-83</scope>
    <scope>DISULFIDE BONDS</scope>
</reference>
<reference key="3">
    <citation type="journal article" date="1999" name="Pure Appl. Chem.">
        <title>Purification, characterization and structural study of the neuropeptides from scorpion Buthus martensii Karsch.</title>
        <authorList>
            <person name="Wu H."/>
            <person name="Wu G."/>
            <person name="Huang X.L."/>
            <person name="He F."/>
            <person name="Jiang S.K."/>
        </authorList>
    </citation>
    <scope>FUNCTION</scope>
</reference>
<reference key="4">
    <citation type="journal article" date="1999" name="Prog. Nat. Sci.">
        <title>A new insect-specific toxin from the venom of scorpion Buthus martensii Karsch.</title>
        <authorList>
            <person name="Wu H."/>
            <person name="Wu G."/>
            <person name="He F."/>
            <person name="Jiang S.K."/>
        </authorList>
    </citation>
    <scope>FUNCTION</scope>
</reference>
<reference key="5">
    <citation type="journal article" date="2007" name="Biochemistry">
        <title>Solution structure of BmKalphaIT01, an alpha-insect toxin from the venom of the Chinese scorpion Buthus martensii Karsch.</title>
        <authorList>
            <person name="Tong X."/>
            <person name="Zhu J."/>
            <person name="Ma Y."/>
            <person name="Chen X."/>
            <person name="Wu G."/>
            <person name="He F."/>
            <person name="Cao C."/>
            <person name="Wu H."/>
        </authorList>
    </citation>
    <scope>STRUCTURE BY NMR OF 20-83</scope>
    <scope>DISULFIDE BONDS</scope>
</reference>
<evidence type="ECO:0000250" key="1"/>
<evidence type="ECO:0000255" key="2">
    <source>
        <dbReference type="PROSITE-ProRule" id="PRU01210"/>
    </source>
</evidence>
<evidence type="ECO:0000269" key="3">
    <source ref="3"/>
</evidence>
<evidence type="ECO:0000269" key="4">
    <source ref="4"/>
</evidence>
<evidence type="ECO:0000305" key="5"/>
<evidence type="ECO:0007829" key="6">
    <source>
        <dbReference type="PDB" id="1OMY"/>
    </source>
</evidence>
<proteinExistence type="evidence at protein level"/>
<accession>Q9GQW3</accession>
<protein>
    <recommendedName>
        <fullName>Toxin BmKaIT1</fullName>
        <shortName>BmKalphaIT1</shortName>
    </recommendedName>
    <alternativeName>
        <fullName>Alpha-neurotoxin IT01</fullName>
    </alternativeName>
    <alternativeName>
        <fullName>Alpha-neurotoxin TX12</fullName>
    </alternativeName>
    <alternativeName>
        <fullName>BmKalphaIT01</fullName>
    </alternativeName>
    <alternativeName>
        <fullName>BmKalphaTx12</fullName>
    </alternativeName>
</protein>